<name>CP7B1_RAT</name>
<dbReference type="EC" id="1.14.14.29" evidence="3"/>
<dbReference type="EMBL" id="U36992">
    <property type="protein sequence ID" value="AAA92616.1"/>
    <property type="molecule type" value="mRNA"/>
</dbReference>
<dbReference type="RefSeq" id="NP_062011.1">
    <property type="nucleotide sequence ID" value="NM_019138.1"/>
</dbReference>
<dbReference type="SMR" id="Q63688"/>
<dbReference type="FunCoup" id="Q63688">
    <property type="interactions" value="35"/>
</dbReference>
<dbReference type="STRING" id="10116.ENSRNOP00000013116"/>
<dbReference type="PhosphoSitePlus" id="Q63688"/>
<dbReference type="PaxDb" id="10116-ENSRNOP00000013116"/>
<dbReference type="GeneID" id="25429"/>
<dbReference type="KEGG" id="rno:25429"/>
<dbReference type="UCSC" id="RGD:2483">
    <property type="organism name" value="rat"/>
</dbReference>
<dbReference type="AGR" id="RGD:2483"/>
<dbReference type="CTD" id="9420"/>
<dbReference type="RGD" id="2483">
    <property type="gene designation" value="Cyp7b1"/>
</dbReference>
<dbReference type="eggNOG" id="KOG0684">
    <property type="taxonomic scope" value="Eukaryota"/>
</dbReference>
<dbReference type="InParanoid" id="Q63688"/>
<dbReference type="OrthoDB" id="62949at9989"/>
<dbReference type="PhylomeDB" id="Q63688"/>
<dbReference type="Reactome" id="R-RNO-192105">
    <property type="pathway name" value="Synthesis of bile acids and bile salts"/>
</dbReference>
<dbReference type="Reactome" id="R-RNO-193368">
    <property type="pathway name" value="Synthesis of bile acids and bile salts via 7alpha-hydroxycholesterol"/>
</dbReference>
<dbReference type="Reactome" id="R-RNO-193807">
    <property type="pathway name" value="Synthesis of bile acids and bile salts via 27-hydroxycholesterol"/>
</dbReference>
<dbReference type="Reactome" id="R-RNO-211976">
    <property type="pathway name" value="Endogenous sterols"/>
</dbReference>
<dbReference type="UniPathway" id="UPA00221"/>
<dbReference type="Proteomes" id="UP000002494">
    <property type="component" value="Unplaced"/>
</dbReference>
<dbReference type="GO" id="GO:0005789">
    <property type="term" value="C:endoplasmic reticulum membrane"/>
    <property type="evidence" value="ECO:0007669"/>
    <property type="project" value="UniProtKB-SubCell"/>
</dbReference>
<dbReference type="GO" id="GO:0033783">
    <property type="term" value="F:25-hydroxycholesterol 7-alpha-hydroxylase activity"/>
    <property type="evidence" value="ECO:0007669"/>
    <property type="project" value="UniProtKB-EC"/>
</dbReference>
<dbReference type="GO" id="GO:0020037">
    <property type="term" value="F:heme binding"/>
    <property type="evidence" value="ECO:0007669"/>
    <property type="project" value="InterPro"/>
</dbReference>
<dbReference type="GO" id="GO:0005506">
    <property type="term" value="F:iron ion binding"/>
    <property type="evidence" value="ECO:0007669"/>
    <property type="project" value="InterPro"/>
</dbReference>
<dbReference type="GO" id="GO:0008396">
    <property type="term" value="F:oxysterol 7-alpha-hydroxylase activity"/>
    <property type="evidence" value="ECO:0000266"/>
    <property type="project" value="RGD"/>
</dbReference>
<dbReference type="GO" id="GO:0035754">
    <property type="term" value="P:B cell chemotaxis"/>
    <property type="evidence" value="ECO:0000250"/>
    <property type="project" value="UniProtKB"/>
</dbReference>
<dbReference type="GO" id="GO:0006699">
    <property type="term" value="P:bile acid biosynthetic process"/>
    <property type="evidence" value="ECO:0000266"/>
    <property type="project" value="RGD"/>
</dbReference>
<dbReference type="GO" id="GO:0042632">
    <property type="term" value="P:cholesterol homeostasis"/>
    <property type="evidence" value="ECO:0000318"/>
    <property type="project" value="GO_Central"/>
</dbReference>
<dbReference type="GO" id="GO:0008203">
    <property type="term" value="P:cholesterol metabolic process"/>
    <property type="evidence" value="ECO:0000304"/>
    <property type="project" value="RGD"/>
</dbReference>
<dbReference type="GO" id="GO:0007623">
    <property type="term" value="P:circadian rhythm"/>
    <property type="evidence" value="ECO:0000314"/>
    <property type="project" value="RGD"/>
</dbReference>
<dbReference type="GO" id="GO:0050673">
    <property type="term" value="P:epithelial cell proliferation"/>
    <property type="evidence" value="ECO:0000266"/>
    <property type="project" value="RGD"/>
</dbReference>
<dbReference type="GO" id="GO:0030520">
    <property type="term" value="P:estrogen receptor signaling pathway"/>
    <property type="evidence" value="ECO:0000266"/>
    <property type="project" value="RGD"/>
</dbReference>
<dbReference type="GO" id="GO:0007613">
    <property type="term" value="P:memory"/>
    <property type="evidence" value="ECO:0000314"/>
    <property type="project" value="RGD"/>
</dbReference>
<dbReference type="GO" id="GO:0033147">
    <property type="term" value="P:negative regulation of intracellular estrogen receptor signaling pathway"/>
    <property type="evidence" value="ECO:0000266"/>
    <property type="project" value="RGD"/>
</dbReference>
<dbReference type="GO" id="GO:0050679">
    <property type="term" value="P:positive regulation of epithelial cell proliferation"/>
    <property type="evidence" value="ECO:0000266"/>
    <property type="project" value="RGD"/>
</dbReference>
<dbReference type="GO" id="GO:0060740">
    <property type="term" value="P:prostate gland epithelium morphogenesis"/>
    <property type="evidence" value="ECO:0000266"/>
    <property type="project" value="RGD"/>
</dbReference>
<dbReference type="GO" id="GO:0051591">
    <property type="term" value="P:response to cAMP"/>
    <property type="evidence" value="ECO:0000270"/>
    <property type="project" value="RGD"/>
</dbReference>
<dbReference type="GO" id="GO:0009410">
    <property type="term" value="P:response to xenobiotic stimulus"/>
    <property type="evidence" value="ECO:0000270"/>
    <property type="project" value="RGD"/>
</dbReference>
<dbReference type="FunFam" id="1.10.630.10:FF:000065">
    <property type="entry name" value="Cytochrome P450 family 7 subfamily B member 1"/>
    <property type="match status" value="1"/>
</dbReference>
<dbReference type="Gene3D" id="1.10.630.10">
    <property type="entry name" value="Cytochrome P450"/>
    <property type="match status" value="1"/>
</dbReference>
<dbReference type="InterPro" id="IPR050529">
    <property type="entry name" value="CYP450_sterol_14alpha_dmase"/>
</dbReference>
<dbReference type="InterPro" id="IPR001128">
    <property type="entry name" value="Cyt_P450"/>
</dbReference>
<dbReference type="InterPro" id="IPR002403">
    <property type="entry name" value="Cyt_P450_E_grp-IV"/>
</dbReference>
<dbReference type="InterPro" id="IPR036396">
    <property type="entry name" value="Cyt_P450_sf"/>
</dbReference>
<dbReference type="PANTHER" id="PTHR24304:SF0">
    <property type="entry name" value="CYTOCHROME P450 7B1"/>
    <property type="match status" value="1"/>
</dbReference>
<dbReference type="PANTHER" id="PTHR24304">
    <property type="entry name" value="CYTOCHROME P450 FAMILY 7"/>
    <property type="match status" value="1"/>
</dbReference>
<dbReference type="Pfam" id="PF00067">
    <property type="entry name" value="p450"/>
    <property type="match status" value="1"/>
</dbReference>
<dbReference type="PRINTS" id="PR00465">
    <property type="entry name" value="EP450IV"/>
</dbReference>
<dbReference type="SUPFAM" id="SSF48264">
    <property type="entry name" value="Cytochrome P450"/>
    <property type="match status" value="1"/>
</dbReference>
<gene>
    <name type="primary">Cyp7b1</name>
</gene>
<feature type="chain" id="PRO_0000051908" description="25-hydroxycholesterol 7-alpha-hydroxylase">
    <location>
        <begin position="1" status="less than"/>
        <end position="414"/>
    </location>
</feature>
<feature type="binding site" description="axial binding residue" evidence="1">
    <location>
        <position position="354"/>
    </location>
    <ligand>
        <name>heme</name>
        <dbReference type="ChEBI" id="CHEBI:30413"/>
    </ligand>
    <ligandPart>
        <name>Fe</name>
        <dbReference type="ChEBI" id="CHEBI:18248"/>
    </ligandPart>
</feature>
<feature type="non-terminal residue">
    <location>
        <position position="1"/>
    </location>
</feature>
<accession>Q63688</accession>
<organism>
    <name type="scientific">Rattus norvegicus</name>
    <name type="common">Rat</name>
    <dbReference type="NCBI Taxonomy" id="10116"/>
    <lineage>
        <taxon>Eukaryota</taxon>
        <taxon>Metazoa</taxon>
        <taxon>Chordata</taxon>
        <taxon>Craniata</taxon>
        <taxon>Vertebrata</taxon>
        <taxon>Euteleostomi</taxon>
        <taxon>Mammalia</taxon>
        <taxon>Eutheria</taxon>
        <taxon>Euarchontoglires</taxon>
        <taxon>Glires</taxon>
        <taxon>Rodentia</taxon>
        <taxon>Myomorpha</taxon>
        <taxon>Muroidea</taxon>
        <taxon>Muridae</taxon>
        <taxon>Murinae</taxon>
        <taxon>Rattus</taxon>
    </lineage>
</organism>
<sequence length="414" mass="48227">ALEYQYVMKNPKQLSFEKFSRRLSAKAFSVKKLLTNDDLSNDIHRGYLLLQGKSLDGLLETMIQEVKEIFESRLLKLTDWNTARVFDFCSSLVFEITFTTIYGKILAANKKQIISELRDDFLKFDDHFPYLVSDIPIQLLRNAEFMQKKIIKCLTPEKVAQMQRRSEIVQERQEMLKKYYGHEEFEIGAHHLGLLWASLANTIPAMFWAMYYLLQHPEAMEVLRDEIDSFLQSTGQKKGPGISVHFTREQLDSLVCLESAILEVLRLCSYSSIIREVQEDMDFSSESRSYRLRKGDFVAVFPPMIHNDPEVFDAPKDFRFDRFVEDGKKKTTFFKGGKKLKSYIIPFGLGTSKCPGRYFAINEMKLLVIILLTYFDLEVIDTKPIGLNHSRMFLGIQHPDSDISFRYKAKSWRS</sequence>
<reference key="1">
    <citation type="journal article" date="1995" name="J. Biol. Chem.">
        <title>A novel cytochrome P450 expressed primarily in brain.</title>
        <authorList>
            <person name="Stapleton G."/>
            <person name="Steel M."/>
            <person name="Richardson M."/>
            <person name="Mason J.O."/>
            <person name="Rose K.A."/>
            <person name="Morris R.G."/>
            <person name="Lathe R."/>
        </authorList>
    </citation>
    <scope>NUCLEOTIDE SEQUENCE [MRNA]</scope>
    <source>
        <tissue>Hippocampus</tissue>
    </source>
</reference>
<reference key="2">
    <citation type="journal article" date="2003" name="Metabolism">
        <title>Regulation of oxysterol 7alpha-hydroxylase (CYP7B1) in the rat.</title>
        <authorList>
            <person name="Ren S."/>
            <person name="Marques D."/>
            <person name="Redford K."/>
            <person name="Hylemon P.B."/>
            <person name="Gil G."/>
            <person name="Vlahcevic Z.R."/>
            <person name="Pandak W.M."/>
        </authorList>
    </citation>
    <scope>CATALYTIC ACTIVITY</scope>
    <scope>CHARACTERIZATION</scope>
</reference>
<protein>
    <recommendedName>
        <fullName>25-hydroxycholesterol 7-alpha-hydroxylase</fullName>
        <ecNumber evidence="3">1.14.14.29</ecNumber>
    </recommendedName>
    <alternativeName>
        <fullName>Cytochrome P450 7B1</fullName>
    </alternativeName>
    <alternativeName>
        <fullName>Hippocampal transcript 1 protein</fullName>
        <shortName>HCT-1</shortName>
    </alternativeName>
    <alternativeName>
        <fullName>Oxysterol 7-alpha-hydroxylase</fullName>
    </alternativeName>
</protein>
<comment type="function">
    <text evidence="2">Oxysterol 7alpha-hydroxylase that mediates formation of 7-alpha,25-dihydroxycholesterol (7-alpha,25-OHC) from 25-hydroxycholesterol. Plays a key role in cell positioning and movement in lymphoid tissues: 7-alpha,25-dihydroxycholesterol (7-alpha,25-OHC) acts as a ligand for the G protein-coupled receptor GPR183/EBI2, a chemotactic receptor for a number of lymphoid cells.</text>
</comment>
<comment type="catalytic activity">
    <reaction evidence="3">
        <text>25-hydroxycholesterol + reduced [NADPH--hemoprotein reductase] + O2 = 7alpha,25-dihydroxycholesterol + oxidized [NADPH--hemoprotein reductase] + H2O + H(+)</text>
        <dbReference type="Rhea" id="RHEA:24308"/>
        <dbReference type="Rhea" id="RHEA-COMP:11964"/>
        <dbReference type="Rhea" id="RHEA-COMP:11965"/>
        <dbReference type="ChEBI" id="CHEBI:15377"/>
        <dbReference type="ChEBI" id="CHEBI:15378"/>
        <dbReference type="ChEBI" id="CHEBI:15379"/>
        <dbReference type="ChEBI" id="CHEBI:37623"/>
        <dbReference type="ChEBI" id="CHEBI:42977"/>
        <dbReference type="ChEBI" id="CHEBI:57618"/>
        <dbReference type="ChEBI" id="CHEBI:58210"/>
        <dbReference type="EC" id="1.14.14.29"/>
    </reaction>
</comment>
<comment type="catalytic activity">
    <reaction evidence="3">
        <text>(25R)-cholest-5-ene-3beta,26-diol + reduced [NADPH--hemoprotein reductase] + O2 = (25R)-cholest-5-en-3beta,7alpha,26-triol + oxidized [NADPH--hemoprotein reductase] + H2O + H(+)</text>
        <dbReference type="Rhea" id="RHEA:19041"/>
        <dbReference type="Rhea" id="RHEA-COMP:11964"/>
        <dbReference type="Rhea" id="RHEA-COMP:11965"/>
        <dbReference type="ChEBI" id="CHEBI:15377"/>
        <dbReference type="ChEBI" id="CHEBI:15378"/>
        <dbReference type="ChEBI" id="CHEBI:15379"/>
        <dbReference type="ChEBI" id="CHEBI:57618"/>
        <dbReference type="ChEBI" id="CHEBI:58210"/>
        <dbReference type="ChEBI" id="CHEBI:76591"/>
        <dbReference type="ChEBI" id="CHEBI:76592"/>
        <dbReference type="EC" id="1.14.14.29"/>
    </reaction>
</comment>
<comment type="cofactor">
    <cofactor evidence="1">
        <name>heme</name>
        <dbReference type="ChEBI" id="CHEBI:30413"/>
    </cofactor>
</comment>
<comment type="pathway">
    <text>Lipid metabolism; bile acid biosynthesis.</text>
</comment>
<comment type="subcellular location">
    <subcellularLocation>
        <location>Endoplasmic reticulum membrane</location>
        <topology>Peripheral membrane protein</topology>
    </subcellularLocation>
    <subcellularLocation>
        <location>Microsome membrane</location>
        <topology>Peripheral membrane protein</topology>
    </subcellularLocation>
</comment>
<comment type="tissue specificity">
    <text>Highly expressed in brain; also expressed in liver and kidney.</text>
</comment>
<comment type="similarity">
    <text evidence="4">Belongs to the cytochrome P450 family.</text>
</comment>
<evidence type="ECO:0000250" key="1"/>
<evidence type="ECO:0000250" key="2">
    <source>
        <dbReference type="UniProtKB" id="Q60991"/>
    </source>
</evidence>
<evidence type="ECO:0000269" key="3">
    <source>
    </source>
</evidence>
<evidence type="ECO:0000305" key="4"/>
<proteinExistence type="evidence at protein level"/>
<keyword id="KW-0153">Cholesterol metabolism</keyword>
<keyword id="KW-0256">Endoplasmic reticulum</keyword>
<keyword id="KW-0349">Heme</keyword>
<keyword id="KW-0408">Iron</keyword>
<keyword id="KW-0443">Lipid metabolism</keyword>
<keyword id="KW-0472">Membrane</keyword>
<keyword id="KW-0479">Metal-binding</keyword>
<keyword id="KW-0492">Microsome</keyword>
<keyword id="KW-0503">Monooxygenase</keyword>
<keyword id="KW-0560">Oxidoreductase</keyword>
<keyword id="KW-1185">Reference proteome</keyword>
<keyword id="KW-0753">Steroid metabolism</keyword>
<keyword id="KW-1207">Sterol metabolism</keyword>